<reference key="1">
    <citation type="journal article" date="1996" name="Yeast">
        <title>Sequence analysis of a 40.7 kb segment from the left arm of yeast chromosome X reveals 14 known genes and 13 new open reading frames including homologues of genes clustered on the right arm of chromosome XI.</title>
        <authorList>
            <person name="Katsoulou C."/>
            <person name="Tzermia M."/>
            <person name="Tavernarakis N."/>
            <person name="Alexandraki D."/>
        </authorList>
    </citation>
    <scope>NUCLEOTIDE SEQUENCE [GENOMIC DNA]</scope>
    <source>
        <strain>ATCC 96604 / S288c / FY1679</strain>
    </source>
</reference>
<reference key="2">
    <citation type="journal article" date="1996" name="EMBO J.">
        <title>Complete nucleotide sequence of Saccharomyces cerevisiae chromosome X.</title>
        <authorList>
            <person name="Galibert F."/>
            <person name="Alexandraki D."/>
            <person name="Baur A."/>
            <person name="Boles E."/>
            <person name="Chalwatzis N."/>
            <person name="Chuat J.-C."/>
            <person name="Coster F."/>
            <person name="Cziepluch C."/>
            <person name="de Haan M."/>
            <person name="Domdey H."/>
            <person name="Durand P."/>
            <person name="Entian K.-D."/>
            <person name="Gatius M."/>
            <person name="Goffeau A."/>
            <person name="Grivell L.A."/>
            <person name="Hennemann A."/>
            <person name="Herbert C.J."/>
            <person name="Heumann K."/>
            <person name="Hilger F."/>
            <person name="Hollenberg C.P."/>
            <person name="Huang M.-E."/>
            <person name="Jacq C."/>
            <person name="Jauniaux J.-C."/>
            <person name="Katsoulou C."/>
            <person name="Kirchrath L."/>
            <person name="Kleine K."/>
            <person name="Kordes E."/>
            <person name="Koetter P."/>
            <person name="Liebl S."/>
            <person name="Louis E.J."/>
            <person name="Manus V."/>
            <person name="Mewes H.-W."/>
            <person name="Miosga T."/>
            <person name="Obermaier B."/>
            <person name="Perea J."/>
            <person name="Pohl T.M."/>
            <person name="Portetelle D."/>
            <person name="Pujol A."/>
            <person name="Purnelle B."/>
            <person name="Ramezani Rad M."/>
            <person name="Rasmussen S.W."/>
            <person name="Rose M."/>
            <person name="Rossau R."/>
            <person name="Schaaff-Gerstenschlaeger I."/>
            <person name="Smits P.H.M."/>
            <person name="Scarcez T."/>
            <person name="Soriano N."/>
            <person name="To Van D."/>
            <person name="Tzermia M."/>
            <person name="Van Broekhoven A."/>
            <person name="Vandenbol M."/>
            <person name="Wedler H."/>
            <person name="von Wettstein D."/>
            <person name="Wambutt R."/>
            <person name="Zagulski M."/>
            <person name="Zollner A."/>
            <person name="Karpfinger-Hartl L."/>
        </authorList>
    </citation>
    <scope>NUCLEOTIDE SEQUENCE [LARGE SCALE GENOMIC DNA]</scope>
    <source>
        <strain>ATCC 204508 / S288c</strain>
    </source>
</reference>
<reference key="3">
    <citation type="journal article" date="2014" name="G3 (Bethesda)">
        <title>The reference genome sequence of Saccharomyces cerevisiae: Then and now.</title>
        <authorList>
            <person name="Engel S.R."/>
            <person name="Dietrich F.S."/>
            <person name="Fisk D.G."/>
            <person name="Binkley G."/>
            <person name="Balakrishnan R."/>
            <person name="Costanzo M.C."/>
            <person name="Dwight S.S."/>
            <person name="Hitz B.C."/>
            <person name="Karra K."/>
            <person name="Nash R.S."/>
            <person name="Weng S."/>
            <person name="Wong E.D."/>
            <person name="Lloyd P."/>
            <person name="Skrzypek M.S."/>
            <person name="Miyasato S.R."/>
            <person name="Simison M."/>
            <person name="Cherry J.M."/>
        </authorList>
    </citation>
    <scope>GENOME REANNOTATION</scope>
    <source>
        <strain>ATCC 204508 / S288c</strain>
    </source>
</reference>
<reference key="4">
    <citation type="journal article" date="1997" name="Mol. Cell. Biol.">
        <title>A34.5, a nonessential component of yeast RNA polymerase I, cooperates with subunit A14 and DNA topoisomerase I to produce a functional rRNA synthesis machine.</title>
        <authorList>
            <person name="Gadal O."/>
            <person name="Mariotte-Labarre S."/>
            <person name="Chedin S."/>
            <person name="Quemeneur E."/>
            <person name="Carles C."/>
            <person name="Sentenac A."/>
            <person name="Thuriaux P."/>
        </authorList>
    </citation>
    <scope>FUNCTION</scope>
    <scope>IDENTIFICATION IN THE RNA POL I COMPLEX</scope>
    <scope>PHOSPHORYLATION</scope>
</reference>
<reference key="5">
    <citation type="journal article" date="2001" name="Proc. Natl. Acad. Sci. U.S.A.">
        <title>Differential roles of phosphorylation in the formation of transcriptional active RNA polymerase I.</title>
        <authorList>
            <person name="Fath S."/>
            <person name="Milkereit P."/>
            <person name="Peyroche G."/>
            <person name="Riva M."/>
            <person name="Carles C."/>
            <person name="Tschochner H."/>
        </authorList>
    </citation>
    <scope>IDENTIFICATION IN THE RNA POL I COMPLEX</scope>
</reference>
<reference key="6">
    <citation type="journal article" date="2007" name="J. Proteome Res.">
        <title>Large-scale phosphorylation analysis of alpha-factor-arrested Saccharomyces cerevisiae.</title>
        <authorList>
            <person name="Li X."/>
            <person name="Gerber S.A."/>
            <person name="Rudner A.D."/>
            <person name="Beausoleil S.A."/>
            <person name="Haas W."/>
            <person name="Villen J."/>
            <person name="Elias J.E."/>
            <person name="Gygi S.P."/>
        </authorList>
    </citation>
    <scope>PHOSPHORYLATION [LARGE SCALE ANALYSIS] AT SER-10; SER-12 AND SER-14</scope>
    <scope>IDENTIFICATION BY MASS SPECTROMETRY [LARGE SCALE ANALYSIS]</scope>
    <source>
        <strain>ADR376</strain>
    </source>
</reference>
<reference key="7">
    <citation type="journal article" date="2008" name="Mol. Cell. Proteomics">
        <title>A multidimensional chromatography technology for in-depth phosphoproteome analysis.</title>
        <authorList>
            <person name="Albuquerque C.P."/>
            <person name="Smolka M.B."/>
            <person name="Payne S.H."/>
            <person name="Bafna V."/>
            <person name="Eng J."/>
            <person name="Zhou H."/>
        </authorList>
    </citation>
    <scope>PHOSPHORYLATION [LARGE SCALE ANALYSIS] AT SER-14 AND SER-60</scope>
    <scope>IDENTIFICATION BY MASS SPECTROMETRY [LARGE SCALE ANALYSIS]</scope>
</reference>
<reference key="8">
    <citation type="journal article" date="2009" name="Science">
        <title>Global analysis of Cdk1 substrate phosphorylation sites provides insights into evolution.</title>
        <authorList>
            <person name="Holt L.J."/>
            <person name="Tuch B.B."/>
            <person name="Villen J."/>
            <person name="Johnson A.D."/>
            <person name="Gygi S.P."/>
            <person name="Morgan D.O."/>
        </authorList>
    </citation>
    <scope>PHOSPHORYLATION [LARGE SCALE ANALYSIS] AT SER-10; SER-12 AND SER-14</scope>
    <scope>IDENTIFICATION BY MASS SPECTROMETRY [LARGE SCALE ANALYSIS]</scope>
</reference>
<reference key="9">
    <citation type="journal article" date="2010" name="Mol. Cell">
        <title>RNA polymerase I contains a TFIIF-related DNA-binding subcomplex.</title>
        <authorList>
            <person name="Geiger S.R."/>
            <person name="Lorenzen K."/>
            <person name="Schreieck A."/>
            <person name="Hanecker P."/>
            <person name="Kostrewa D."/>
            <person name="Heck A.J."/>
            <person name="Cramer P."/>
        </authorList>
    </citation>
    <scope>FUNCTION</scope>
    <scope>INTERACTION WITH RPA49</scope>
    <scope>IDENTIFICATION BY MASS SPECTROMETRY</scope>
    <scope>SUBUNIT</scope>
</reference>
<reference key="10">
    <citation type="journal article" date="2002" name="EMBO J.">
        <title>Localization of the yeast RNA polymerase I-specific subunits.</title>
        <authorList>
            <person name="Bischler N."/>
            <person name="Brino L."/>
            <person name="Carles C."/>
            <person name="Riva M."/>
            <person name="Tschochner H."/>
            <person name="Mallouh V."/>
            <person name="Schultz P."/>
        </authorList>
    </citation>
    <scope>ELECTRON MICROSCOPY OF THE RNA POLYMERASE I COMPLEX</scope>
</reference>
<reference key="11">
    <citation type="journal article" date="2002" name="Mol. Microbiol.">
        <title>Rpa12p, a conserved RNA polymerase I subunit with two functional domains.</title>
        <authorList>
            <person name="Van Mullem V."/>
            <person name="Landrieux E."/>
            <person name="Vandenhaute J."/>
            <person name="Thuriaux P."/>
        </authorList>
    </citation>
    <scope>IDENTIFICATION IN THE RNA POL I COMPLEX</scope>
</reference>
<reference key="12">
    <citation type="journal article" date="2002" name="Proc. Natl. Acad. Sci. U.S.A.">
        <title>The A14-A43 heterodimer subunit in yeast RNA pol I and their relationship to Rpb4-Rpb7 pol II subunits.</title>
        <authorList>
            <person name="Peyroche G."/>
            <person name="Levillain E."/>
            <person name="Siaut M."/>
            <person name="Callebaut I."/>
            <person name="Schultz P."/>
            <person name="Sentenac A."/>
            <person name="Riva M."/>
            <person name="Carles C."/>
        </authorList>
    </citation>
    <scope>IDENTIFICATION IN THE RNA POL I COMPLEX</scope>
</reference>
<reference key="13">
    <citation type="journal article" date="2003" name="Nature">
        <title>Global analysis of protein localization in budding yeast.</title>
        <authorList>
            <person name="Huh W.-K."/>
            <person name="Falvo J.V."/>
            <person name="Gerke L.C."/>
            <person name="Carroll A.S."/>
            <person name="Howson R.W."/>
            <person name="Weissman J.S."/>
            <person name="O'Shea E.K."/>
        </authorList>
    </citation>
    <scope>SUBCELLULAR LOCATION [LARGE SCALE ANALYSIS]</scope>
</reference>
<reference key="14">
    <citation type="journal article" date="2003" name="Nature">
        <title>Global analysis of protein expression in yeast.</title>
        <authorList>
            <person name="Ghaemmaghami S."/>
            <person name="Huh W.-K."/>
            <person name="Bower K."/>
            <person name="Howson R.W."/>
            <person name="Belle A."/>
            <person name="Dephoure N."/>
            <person name="O'Shea E.K."/>
            <person name="Weissman J.S."/>
        </authorList>
    </citation>
    <scope>LEVEL OF PROTEIN EXPRESSION [LARGE SCALE ANALYSIS]</scope>
</reference>
<reference key="15">
    <citation type="journal article" date="2007" name="Cell">
        <title>Functional architecture of RNA polymerase I.</title>
        <authorList>
            <person name="Kuhn C.D."/>
            <person name="Geiger S.R."/>
            <person name="Baumli S."/>
            <person name="Gartmann M."/>
            <person name="Gerber J."/>
            <person name="Jennebach S."/>
            <person name="Mielke T."/>
            <person name="Tschochner H."/>
            <person name="Beckmann R."/>
            <person name="Cramer P."/>
        </authorList>
    </citation>
    <scope>STRUCTURE BY ELECTRON MICROSCOPY (12.00 ANGSTROMS) OF THE POL I COMPLEX</scope>
    <scope>FUNCTION</scope>
    <scope>SUBUNIT</scope>
</reference>
<reference key="16">
    <citation type="journal article" date="2013" name="Nature">
        <title>Crystal structure of the 14-subunit RNA polymerase I.</title>
        <authorList>
            <person name="Fernandez-Tornero C."/>
            <person name="Moreno-Morcillo M."/>
            <person name="Rashid U.J."/>
            <person name="Taylor N.M."/>
            <person name="Ruiz F.M."/>
            <person name="Gruene T."/>
            <person name="Legrand P."/>
            <person name="Steuerwald U."/>
            <person name="Muller C.W."/>
        </authorList>
    </citation>
    <scope>X-RAY CRYSTALLOGRAPHY (3.0 ANGSTROMS) OF THE POL I COMPLEX</scope>
    <scope>FUNCTION</scope>
    <scope>SUBUNIT</scope>
</reference>
<reference key="17">
    <citation type="journal article" date="2013" name="Nature">
        <title>RNA polymerase I structure and transcription regulation.</title>
        <authorList>
            <person name="Engel C."/>
            <person name="Sainsbury S."/>
            <person name="Cheung A.C."/>
            <person name="Kostrewa D."/>
            <person name="Cramer P."/>
        </authorList>
    </citation>
    <scope>X-RAY CRYSTALLOGRAPHY (2.8 ANGSTROMS) OF THE POL I COMPLEX</scope>
    <scope>FUNCTION</scope>
    <scope>SUBUNIT</scope>
</reference>
<accession>P47006</accession>
<accession>D6VW37</accession>
<proteinExistence type="evidence at protein level"/>
<protein>
    <recommendedName>
        <fullName>DNA-directed RNA polymerase I subunit RPA34</fullName>
        <shortName>A34</shortName>
    </recommendedName>
    <alternativeName>
        <fullName>DNA-directed DNA-dependent RNA polymerase 34.5 kDa polypeptide</fullName>
        <shortName>A34.5</shortName>
    </alternativeName>
</protein>
<gene>
    <name type="primary">RPA34</name>
    <name type="ordered locus">YJL148W</name>
    <name type="ORF">J0637</name>
</gene>
<organism>
    <name type="scientific">Saccharomyces cerevisiae (strain ATCC 204508 / S288c)</name>
    <name type="common">Baker's yeast</name>
    <dbReference type="NCBI Taxonomy" id="559292"/>
    <lineage>
        <taxon>Eukaryota</taxon>
        <taxon>Fungi</taxon>
        <taxon>Dikarya</taxon>
        <taxon>Ascomycota</taxon>
        <taxon>Saccharomycotina</taxon>
        <taxon>Saccharomycetes</taxon>
        <taxon>Saccharomycetales</taxon>
        <taxon>Saccharomycetaceae</taxon>
        <taxon>Saccharomyces</taxon>
    </lineage>
</organism>
<dbReference type="EMBL" id="Z49423">
    <property type="protein sequence ID" value="CAA89443.1"/>
    <property type="molecule type" value="Genomic_DNA"/>
</dbReference>
<dbReference type="EMBL" id="X87371">
    <property type="protein sequence ID" value="CAA60807.1"/>
    <property type="molecule type" value="Genomic_DNA"/>
</dbReference>
<dbReference type="EMBL" id="BK006943">
    <property type="protein sequence ID" value="DAA08653.1"/>
    <property type="molecule type" value="Genomic_DNA"/>
</dbReference>
<dbReference type="PIR" id="S55165">
    <property type="entry name" value="S55165"/>
</dbReference>
<dbReference type="RefSeq" id="NP_012387.1">
    <property type="nucleotide sequence ID" value="NM_001181581.1"/>
</dbReference>
<dbReference type="PDB" id="4C2M">
    <property type="method" value="X-ray"/>
    <property type="resolution" value="2.80 A"/>
    <property type="chains" value="3/N=1-233"/>
</dbReference>
<dbReference type="PDB" id="4C3H">
    <property type="method" value="X-ray"/>
    <property type="resolution" value="3.27 A"/>
    <property type="chains" value="N=1-233"/>
</dbReference>
<dbReference type="PDB" id="4C3I">
    <property type="method" value="X-ray"/>
    <property type="resolution" value="3.00 A"/>
    <property type="chains" value="N=1-233"/>
</dbReference>
<dbReference type="PDB" id="4C3J">
    <property type="method" value="X-ray"/>
    <property type="resolution" value="3.35 A"/>
    <property type="chains" value="N=1-233"/>
</dbReference>
<dbReference type="PDB" id="4YM7">
    <property type="method" value="X-ray"/>
    <property type="resolution" value="5.50 A"/>
    <property type="chains" value="AN/BN/CN/DN/EN/FN=1-233"/>
</dbReference>
<dbReference type="PDB" id="5G5L">
    <property type="method" value="EM"/>
    <property type="resolution" value="4.80 A"/>
    <property type="chains" value="N=1-233"/>
</dbReference>
<dbReference type="PDB" id="5LMX">
    <property type="method" value="EM"/>
    <property type="resolution" value="4.90 A"/>
    <property type="chains" value="N=1-233"/>
</dbReference>
<dbReference type="PDB" id="5M3F">
    <property type="method" value="EM"/>
    <property type="resolution" value="3.80 A"/>
    <property type="chains" value="N=1-233"/>
</dbReference>
<dbReference type="PDB" id="5M3M">
    <property type="method" value="EM"/>
    <property type="resolution" value="4.00 A"/>
    <property type="chains" value="N=1-233"/>
</dbReference>
<dbReference type="PDB" id="5M5W">
    <property type="method" value="EM"/>
    <property type="resolution" value="3.80 A"/>
    <property type="chains" value="N=1-233"/>
</dbReference>
<dbReference type="PDB" id="5M5X">
    <property type="method" value="EM"/>
    <property type="resolution" value="4.00 A"/>
    <property type="chains" value="N=1-233"/>
</dbReference>
<dbReference type="PDB" id="5M5Y">
    <property type="method" value="EM"/>
    <property type="resolution" value="4.00 A"/>
    <property type="chains" value="N=1-233"/>
</dbReference>
<dbReference type="PDB" id="5M64">
    <property type="method" value="EM"/>
    <property type="resolution" value="4.60 A"/>
    <property type="chains" value="N=1-233"/>
</dbReference>
<dbReference type="PDB" id="5N5Y">
    <property type="method" value="EM"/>
    <property type="resolution" value="7.70 A"/>
    <property type="chains" value="N=1-233"/>
</dbReference>
<dbReference type="PDB" id="5N5Z">
    <property type="method" value="EM"/>
    <property type="resolution" value="7.70 A"/>
    <property type="chains" value="N=1-233"/>
</dbReference>
<dbReference type="PDB" id="5N60">
    <property type="method" value="EM"/>
    <property type="resolution" value="7.70 A"/>
    <property type="chains" value="N=1-233"/>
</dbReference>
<dbReference type="PDB" id="5N61">
    <property type="method" value="EM"/>
    <property type="resolution" value="3.40 A"/>
    <property type="chains" value="N=1-233"/>
</dbReference>
<dbReference type="PDB" id="5OA1">
    <property type="method" value="EM"/>
    <property type="resolution" value="4.40 A"/>
    <property type="chains" value="N=1-233"/>
</dbReference>
<dbReference type="PDB" id="5W5Y">
    <property type="method" value="EM"/>
    <property type="resolution" value="3.80 A"/>
    <property type="chains" value="N=1-233"/>
</dbReference>
<dbReference type="PDB" id="5W64">
    <property type="method" value="EM"/>
    <property type="resolution" value="4.20 A"/>
    <property type="chains" value="N=1-233"/>
</dbReference>
<dbReference type="PDB" id="5W65">
    <property type="method" value="EM"/>
    <property type="resolution" value="4.30 A"/>
    <property type="chains" value="N=1-233"/>
</dbReference>
<dbReference type="PDB" id="5W66">
    <property type="method" value="EM"/>
    <property type="resolution" value="3.90 A"/>
    <property type="chains" value="N=1-233"/>
</dbReference>
<dbReference type="PDB" id="6H67">
    <property type="method" value="EM"/>
    <property type="resolution" value="3.60 A"/>
    <property type="chains" value="N=1-233"/>
</dbReference>
<dbReference type="PDB" id="6H68">
    <property type="method" value="EM"/>
    <property type="resolution" value="4.60 A"/>
    <property type="chains" value="N=1-233"/>
</dbReference>
<dbReference type="PDB" id="6HKO">
    <property type="method" value="EM"/>
    <property type="resolution" value="3.42 A"/>
    <property type="chains" value="N=1-233"/>
</dbReference>
<dbReference type="PDB" id="6RQH">
    <property type="method" value="EM"/>
    <property type="resolution" value="3.70 A"/>
    <property type="chains" value="N=1-233"/>
</dbReference>
<dbReference type="PDB" id="6RQL">
    <property type="method" value="EM"/>
    <property type="resolution" value="2.90 A"/>
    <property type="chains" value="N=1-233"/>
</dbReference>
<dbReference type="PDB" id="6RQT">
    <property type="method" value="EM"/>
    <property type="resolution" value="4.00 A"/>
    <property type="chains" value="N=1-233"/>
</dbReference>
<dbReference type="PDB" id="6RRD">
    <property type="method" value="EM"/>
    <property type="resolution" value="3.10 A"/>
    <property type="chains" value="N=1-233"/>
</dbReference>
<dbReference type="PDB" id="6RUI">
    <property type="method" value="EM"/>
    <property type="resolution" value="2.70 A"/>
    <property type="chains" value="N=1-233"/>
</dbReference>
<dbReference type="PDB" id="6RUO">
    <property type="method" value="EM"/>
    <property type="resolution" value="3.50 A"/>
    <property type="chains" value="N=1-233"/>
</dbReference>
<dbReference type="PDB" id="6RWE">
    <property type="method" value="EM"/>
    <property type="resolution" value="3.00 A"/>
    <property type="chains" value="N=1-233"/>
</dbReference>
<dbReference type="PDB" id="6TPS">
    <property type="method" value="EM"/>
    <property type="resolution" value="3.54 A"/>
    <property type="chains" value="N=1-233"/>
</dbReference>
<dbReference type="PDBsum" id="4C2M"/>
<dbReference type="PDBsum" id="4C3H"/>
<dbReference type="PDBsum" id="4C3I"/>
<dbReference type="PDBsum" id="4C3J"/>
<dbReference type="PDBsum" id="4YM7"/>
<dbReference type="PDBsum" id="5G5L"/>
<dbReference type="PDBsum" id="5LMX"/>
<dbReference type="PDBsum" id="5M3F"/>
<dbReference type="PDBsum" id="5M3M"/>
<dbReference type="PDBsum" id="5M5W"/>
<dbReference type="PDBsum" id="5M5X"/>
<dbReference type="PDBsum" id="5M5Y"/>
<dbReference type="PDBsum" id="5M64"/>
<dbReference type="PDBsum" id="5N5Y"/>
<dbReference type="PDBsum" id="5N5Z"/>
<dbReference type="PDBsum" id="5N60"/>
<dbReference type="PDBsum" id="5N61"/>
<dbReference type="PDBsum" id="5OA1"/>
<dbReference type="PDBsum" id="5W5Y"/>
<dbReference type="PDBsum" id="5W64"/>
<dbReference type="PDBsum" id="5W65"/>
<dbReference type="PDBsum" id="5W66"/>
<dbReference type="PDBsum" id="6H67"/>
<dbReference type="PDBsum" id="6H68"/>
<dbReference type="PDBsum" id="6HKO"/>
<dbReference type="PDBsum" id="6RQH"/>
<dbReference type="PDBsum" id="6RQL"/>
<dbReference type="PDBsum" id="6RQT"/>
<dbReference type="PDBsum" id="6RRD"/>
<dbReference type="PDBsum" id="6RUI"/>
<dbReference type="PDBsum" id="6RUO"/>
<dbReference type="PDBsum" id="6RWE"/>
<dbReference type="PDBsum" id="6TPS"/>
<dbReference type="EMDB" id="EMD-0146"/>
<dbReference type="EMDB" id="EMD-0147"/>
<dbReference type="EMDB" id="EMD-0238"/>
<dbReference type="EMDB" id="EMD-10006"/>
<dbReference type="EMDB" id="EMD-10007"/>
<dbReference type="EMDB" id="EMD-10038"/>
<dbReference type="EMDB" id="EMD-10544"/>
<dbReference type="EMDB" id="EMD-3446"/>
<dbReference type="EMDB" id="EMD-3447"/>
<dbReference type="EMDB" id="EMD-3448"/>
<dbReference type="EMDB" id="EMD-3449"/>
<dbReference type="EMDB" id="EMD-3590"/>
<dbReference type="EMDB" id="EMD-3591"/>
<dbReference type="EMDB" id="EMD-3592"/>
<dbReference type="EMDB" id="EMD-3593"/>
<dbReference type="EMDB" id="EMD-3727"/>
<dbReference type="EMDB" id="EMD-4088"/>
<dbReference type="EMDB" id="EMD-4147"/>
<dbReference type="EMDB" id="EMD-4148"/>
<dbReference type="EMDB" id="EMD-4982"/>
<dbReference type="EMDB" id="EMD-4984"/>
<dbReference type="EMDB" id="EMD-4985"/>
<dbReference type="EMDB" id="EMD-4987"/>
<dbReference type="EMDB" id="EMD-8771"/>
<dbReference type="EMDB" id="EMD-8773"/>
<dbReference type="EMDB" id="EMD-8774"/>
<dbReference type="EMDB" id="EMD-8775"/>
<dbReference type="EMDB" id="EMD-8776"/>
<dbReference type="EMDB" id="EMD-8777"/>
<dbReference type="SMR" id="P47006"/>
<dbReference type="BioGRID" id="33610">
    <property type="interactions" value="563"/>
</dbReference>
<dbReference type="ComplexPortal" id="CPX-1664">
    <property type="entry name" value="DNA-directed RNA Polymerase I complex"/>
</dbReference>
<dbReference type="DIP" id="DIP-7973N"/>
<dbReference type="FunCoup" id="P47006">
    <property type="interactions" value="286"/>
</dbReference>
<dbReference type="IntAct" id="P47006">
    <property type="interactions" value="44"/>
</dbReference>
<dbReference type="MINT" id="P47006"/>
<dbReference type="STRING" id="4932.YJL148W"/>
<dbReference type="iPTMnet" id="P47006"/>
<dbReference type="PaxDb" id="4932-YJL148W"/>
<dbReference type="PeptideAtlas" id="P47006"/>
<dbReference type="EnsemblFungi" id="YJL148W_mRNA">
    <property type="protein sequence ID" value="YJL148W"/>
    <property type="gene ID" value="YJL148W"/>
</dbReference>
<dbReference type="GeneID" id="853293"/>
<dbReference type="KEGG" id="sce:YJL148W"/>
<dbReference type="AGR" id="SGD:S000003684"/>
<dbReference type="SGD" id="S000003684">
    <property type="gene designation" value="RPA34"/>
</dbReference>
<dbReference type="VEuPathDB" id="FungiDB:YJL148W"/>
<dbReference type="eggNOG" id="ENOG502S2EI">
    <property type="taxonomic scope" value="Eukaryota"/>
</dbReference>
<dbReference type="HOGENOM" id="CLU_090034_0_0_1"/>
<dbReference type="InParanoid" id="P47006"/>
<dbReference type="OMA" id="HFPTGYG"/>
<dbReference type="OrthoDB" id="4089784at2759"/>
<dbReference type="BioCyc" id="YEAST:G3O-31592-MONOMER"/>
<dbReference type="BioGRID-ORCS" id="853293">
    <property type="hits" value="3 hits in 10 CRISPR screens"/>
</dbReference>
<dbReference type="EvolutionaryTrace" id="P47006"/>
<dbReference type="PRO" id="PR:P47006"/>
<dbReference type="Proteomes" id="UP000002311">
    <property type="component" value="Chromosome X"/>
</dbReference>
<dbReference type="RNAct" id="P47006">
    <property type="molecule type" value="protein"/>
</dbReference>
<dbReference type="GO" id="GO:0005730">
    <property type="term" value="C:nucleolus"/>
    <property type="evidence" value="ECO:0000314"/>
    <property type="project" value="SGD"/>
</dbReference>
<dbReference type="GO" id="GO:0005634">
    <property type="term" value="C:nucleus"/>
    <property type="evidence" value="ECO:0000314"/>
    <property type="project" value="ComplexPortal"/>
</dbReference>
<dbReference type="GO" id="GO:0005736">
    <property type="term" value="C:RNA polymerase I complex"/>
    <property type="evidence" value="ECO:0000314"/>
    <property type="project" value="UniProtKB"/>
</dbReference>
<dbReference type="GO" id="GO:0003899">
    <property type="term" value="F:DNA-directed RNA polymerase activity"/>
    <property type="evidence" value="ECO:0000314"/>
    <property type="project" value="UniProtKB"/>
</dbReference>
<dbReference type="GO" id="GO:0042790">
    <property type="term" value="P:nucleolar large rRNA transcription by RNA polymerase I"/>
    <property type="evidence" value="ECO:0000314"/>
    <property type="project" value="ComplexPortal"/>
</dbReference>
<dbReference type="GO" id="GO:0042254">
    <property type="term" value="P:ribosome biogenesis"/>
    <property type="evidence" value="ECO:0007669"/>
    <property type="project" value="UniProtKB-KW"/>
</dbReference>
<dbReference type="GO" id="GO:0006363">
    <property type="term" value="P:termination of RNA polymerase I transcription"/>
    <property type="evidence" value="ECO:0000314"/>
    <property type="project" value="ComplexPortal"/>
</dbReference>
<dbReference type="GO" id="GO:0006360">
    <property type="term" value="P:transcription by RNA polymerase I"/>
    <property type="evidence" value="ECO:0000314"/>
    <property type="project" value="UniProtKB"/>
</dbReference>
<dbReference type="GO" id="GO:0006362">
    <property type="term" value="P:transcription elongation by RNA polymerase I"/>
    <property type="evidence" value="ECO:0000314"/>
    <property type="project" value="ComplexPortal"/>
</dbReference>
<dbReference type="GO" id="GO:0006361">
    <property type="term" value="P:transcription initiation at RNA polymerase I promoter"/>
    <property type="evidence" value="ECO:0000314"/>
    <property type="project" value="ComplexPortal"/>
</dbReference>
<dbReference type="Gene3D" id="6.20.250.70">
    <property type="match status" value="1"/>
</dbReference>
<dbReference type="InterPro" id="IPR013240">
    <property type="entry name" value="DNA-dir_RNA_pol1_su_RPA34"/>
</dbReference>
<dbReference type="InterPro" id="IPR053263">
    <property type="entry name" value="Euk_RPA34_RNAP_subunit"/>
</dbReference>
<dbReference type="PANTHER" id="PTHR28155">
    <property type="entry name" value="ACR243WP"/>
    <property type="match status" value="1"/>
</dbReference>
<dbReference type="PANTHER" id="PTHR28155:SF1">
    <property type="entry name" value="DNA-DIRECTED RNA POLYMERASE I SUBUNIT RPA34.5-DOMAIN-CONTAINING PROTEIN"/>
    <property type="match status" value="1"/>
</dbReference>
<dbReference type="Pfam" id="PF08208">
    <property type="entry name" value="RNA_polI_A34"/>
    <property type="match status" value="1"/>
</dbReference>
<comment type="function">
    <text evidence="7 8 9 10 11">DNA-dependent RNA polymerases catalyze the transcription of DNA into RNA using the four ribonucleoside triphosphates as substrates. Component of RNA polymerase I (Pol I) which synthesizes ribosomal RNA precursors. Besides, RNA polymerase I has intrinsic RNA cleavage activity. The heterodimer formed by RPA34 and RPA49 stimulates transcript elongation by Pol I.</text>
</comment>
<comment type="subunit">
    <text evidence="2 3 4 7 8 9 10 11">Component of the RNA polymerase I (Pol I) complex consisting of 14 subunits: RPA135, RPA190, RPC40, RPA14, RPB5, RPO26, RPA43, RPB8, RPA12, RPB10, RPC19, RPC10, RPA49 and RPA34. The complex is composed of a horseshoe-shaped core containing ten subunits (RPA135, RPA190, RPB5, RPO26, RPB8, RPB10, RPC10, RPA12, RPC19 and RPC40) where RPA135 and RPA190 form the DNA-binding cleft. Outside of the core, RPA14 and RPA43 form the stalk that mediates interactions with transcription initiation factors and newly synthesized RNA. Forms a TFIIF-like heterodimer with RPA49; the heterodimer formed by RPA34 and RPA49 can be dissociated from the Pol I core giving rise to a 12 subunit form A* of Pol I (formerly called pol A) that shows impaired transcript elongation activity and increased sensitivity to alpha-amanitin. The heterodimer formed by RPA34 and RPA49 stabilizes subunit RPA12 and stimulates RPA12-dependent RNA cleavage.</text>
</comment>
<comment type="subcellular location">
    <subcellularLocation>
        <location evidence="5">Nucleus</location>
        <location evidence="5">Nucleolus</location>
    </subcellularLocation>
</comment>
<comment type="miscellaneous">
    <text evidence="6">Present with 3360 molecules/cell in log phase SD medium.</text>
</comment>
<comment type="similarity">
    <text evidence="12">Belongs to the eukaryotic RPA34 RNA polymerase subunit family.</text>
</comment>
<name>RPA34_YEAST</name>
<evidence type="ECO:0000256" key="1">
    <source>
        <dbReference type="SAM" id="MobiDB-lite"/>
    </source>
</evidence>
<evidence type="ECO:0000269" key="2">
    <source>
    </source>
</evidence>
<evidence type="ECO:0000269" key="3">
    <source>
    </source>
</evidence>
<evidence type="ECO:0000269" key="4">
    <source>
    </source>
</evidence>
<evidence type="ECO:0000269" key="5">
    <source>
    </source>
</evidence>
<evidence type="ECO:0000269" key="6">
    <source>
    </source>
</evidence>
<evidence type="ECO:0000269" key="7">
    <source>
    </source>
</evidence>
<evidence type="ECO:0000269" key="8">
    <source>
    </source>
</evidence>
<evidence type="ECO:0000269" key="9">
    <source>
    </source>
</evidence>
<evidence type="ECO:0000269" key="10">
    <source>
    </source>
</evidence>
<evidence type="ECO:0000269" key="11">
    <source>
    </source>
</evidence>
<evidence type="ECO:0000305" key="12"/>
<evidence type="ECO:0007744" key="13">
    <source>
    </source>
</evidence>
<evidence type="ECO:0007744" key="14">
    <source>
    </source>
</evidence>
<evidence type="ECO:0007744" key="15">
    <source>
    </source>
</evidence>
<evidence type="ECO:0007829" key="16">
    <source>
        <dbReference type="PDB" id="4C2M"/>
    </source>
</evidence>
<evidence type="ECO:0007829" key="17">
    <source>
        <dbReference type="PDB" id="4C3I"/>
    </source>
</evidence>
<evidence type="ECO:0007829" key="18">
    <source>
        <dbReference type="PDB" id="6RRD"/>
    </source>
</evidence>
<evidence type="ECO:0007829" key="19">
    <source>
        <dbReference type="PDB" id="6RUI"/>
    </source>
</evidence>
<feature type="chain" id="PRO_0000203031" description="DNA-directed RNA polymerase I subunit RPA34">
    <location>
        <begin position="1"/>
        <end position="233"/>
    </location>
</feature>
<feature type="region of interest" description="Disordered" evidence="1">
    <location>
        <begin position="179"/>
        <end position="233"/>
    </location>
</feature>
<feature type="compositionally biased region" description="Basic and acidic residues" evidence="1">
    <location>
        <begin position="179"/>
        <end position="191"/>
    </location>
</feature>
<feature type="compositionally biased region" description="Basic residues" evidence="1">
    <location>
        <begin position="208"/>
        <end position="233"/>
    </location>
</feature>
<feature type="modified residue" description="Phosphoserine" evidence="13 15">
    <location>
        <position position="10"/>
    </location>
</feature>
<feature type="modified residue" description="Phosphoserine" evidence="13 15">
    <location>
        <position position="12"/>
    </location>
</feature>
<feature type="modified residue" description="Phosphoserine" evidence="13 14 15">
    <location>
        <position position="14"/>
    </location>
</feature>
<feature type="modified residue" description="Phosphoserine" evidence="14">
    <location>
        <position position="60"/>
    </location>
</feature>
<feature type="strand" evidence="19">
    <location>
        <begin position="29"/>
        <end position="31"/>
    </location>
</feature>
<feature type="strand" evidence="19">
    <location>
        <begin position="52"/>
        <end position="59"/>
    </location>
</feature>
<feature type="strand" evidence="18">
    <location>
        <begin position="60"/>
        <end position="62"/>
    </location>
</feature>
<feature type="helix" evidence="19">
    <location>
        <begin position="64"/>
        <end position="66"/>
    </location>
</feature>
<feature type="strand" evidence="17">
    <location>
        <begin position="68"/>
        <end position="71"/>
    </location>
</feature>
<feature type="strand" evidence="19">
    <location>
        <begin position="74"/>
        <end position="76"/>
    </location>
</feature>
<feature type="strand" evidence="19">
    <location>
        <begin position="80"/>
        <end position="82"/>
    </location>
</feature>
<feature type="strand" evidence="19">
    <location>
        <begin position="85"/>
        <end position="89"/>
    </location>
</feature>
<feature type="helix" evidence="16">
    <location>
        <begin position="93"/>
        <end position="96"/>
    </location>
</feature>
<feature type="strand" evidence="16">
    <location>
        <begin position="99"/>
        <end position="101"/>
    </location>
</feature>
<feature type="strand" evidence="19">
    <location>
        <begin position="108"/>
        <end position="111"/>
    </location>
</feature>
<feature type="strand" evidence="19">
    <location>
        <begin position="113"/>
        <end position="117"/>
    </location>
</feature>
<feature type="strand" evidence="17">
    <location>
        <begin position="119"/>
        <end position="121"/>
    </location>
</feature>
<feature type="strand" evidence="16">
    <location>
        <begin position="125"/>
        <end position="127"/>
    </location>
</feature>
<feature type="strand" evidence="19">
    <location>
        <begin position="134"/>
        <end position="142"/>
    </location>
</feature>
<feature type="helix" evidence="19">
    <location>
        <begin position="150"/>
        <end position="153"/>
    </location>
</feature>
<feature type="helix" evidence="16">
    <location>
        <begin position="177"/>
        <end position="179"/>
    </location>
</feature>
<keyword id="KW-0002">3D-structure</keyword>
<keyword id="KW-0240">DNA-directed RNA polymerase</keyword>
<keyword id="KW-0539">Nucleus</keyword>
<keyword id="KW-0597">Phosphoprotein</keyword>
<keyword id="KW-1185">Reference proteome</keyword>
<keyword id="KW-0690">Ribosome biogenesis</keyword>
<keyword id="KW-0804">Transcription</keyword>
<sequence>MSKLSKDYVSDSDSDDEVISNEFSIPDGFKKCKHLKNFPLNGDNKKKAKQQQVWLIKFPSNVDISKLKSLPVDFESSTTMTIDKHDYKIMDDTDIESSLTQDNLSNMTLLVPSESKESLKIASTAKDNAPLQFDKVFSVSETAKIPAIDYSKVRVPRKDVPKVEGLKLEHFATGYDAEDFHVAEEVKENKKEPKKRSHHDDEEESSEKKKKKKEKREKREKKDKKDKKKKHRD</sequence>